<name>GRPE_AGRFC</name>
<keyword id="KW-0143">Chaperone</keyword>
<keyword id="KW-0963">Cytoplasm</keyword>
<keyword id="KW-1185">Reference proteome</keyword>
<keyword id="KW-0346">Stress response</keyword>
<dbReference type="EMBL" id="AE007869">
    <property type="protein sequence ID" value="AAK86146.1"/>
    <property type="molecule type" value="Genomic_DNA"/>
</dbReference>
<dbReference type="PIR" id="A97399">
    <property type="entry name" value="A97399"/>
</dbReference>
<dbReference type="PIR" id="AI2616">
    <property type="entry name" value="AI2616"/>
</dbReference>
<dbReference type="RefSeq" id="NP_353361.1">
    <property type="nucleotide sequence ID" value="NC_003062.2"/>
</dbReference>
<dbReference type="RefSeq" id="WP_010970822.1">
    <property type="nucleotide sequence ID" value="NC_003062.2"/>
</dbReference>
<dbReference type="SMR" id="P63187"/>
<dbReference type="STRING" id="176299.Atu0329"/>
<dbReference type="EnsemblBacteria" id="AAK86146">
    <property type="protein sequence ID" value="AAK86146"/>
    <property type="gene ID" value="Atu0329"/>
</dbReference>
<dbReference type="GeneID" id="1132367"/>
<dbReference type="KEGG" id="atu:Atu0329"/>
<dbReference type="PATRIC" id="fig|176299.10.peg.321"/>
<dbReference type="eggNOG" id="COG0576">
    <property type="taxonomic scope" value="Bacteria"/>
</dbReference>
<dbReference type="HOGENOM" id="CLU_057217_0_2_5"/>
<dbReference type="OrthoDB" id="9789811at2"/>
<dbReference type="PhylomeDB" id="P63187"/>
<dbReference type="BioCyc" id="AGRO:ATU0329-MONOMER"/>
<dbReference type="Proteomes" id="UP000000813">
    <property type="component" value="Chromosome circular"/>
</dbReference>
<dbReference type="GO" id="GO:0005737">
    <property type="term" value="C:cytoplasm"/>
    <property type="evidence" value="ECO:0007669"/>
    <property type="project" value="UniProtKB-SubCell"/>
</dbReference>
<dbReference type="GO" id="GO:0000774">
    <property type="term" value="F:adenyl-nucleotide exchange factor activity"/>
    <property type="evidence" value="ECO:0007669"/>
    <property type="project" value="InterPro"/>
</dbReference>
<dbReference type="GO" id="GO:0042803">
    <property type="term" value="F:protein homodimerization activity"/>
    <property type="evidence" value="ECO:0007669"/>
    <property type="project" value="InterPro"/>
</dbReference>
<dbReference type="GO" id="GO:0051087">
    <property type="term" value="F:protein-folding chaperone binding"/>
    <property type="evidence" value="ECO:0007669"/>
    <property type="project" value="InterPro"/>
</dbReference>
<dbReference type="GO" id="GO:0051082">
    <property type="term" value="F:unfolded protein binding"/>
    <property type="evidence" value="ECO:0007669"/>
    <property type="project" value="TreeGrafter"/>
</dbReference>
<dbReference type="GO" id="GO:0006457">
    <property type="term" value="P:protein folding"/>
    <property type="evidence" value="ECO:0007669"/>
    <property type="project" value="InterPro"/>
</dbReference>
<dbReference type="CDD" id="cd00446">
    <property type="entry name" value="GrpE"/>
    <property type="match status" value="1"/>
</dbReference>
<dbReference type="FunFam" id="2.30.22.10:FF:000001">
    <property type="entry name" value="Protein GrpE"/>
    <property type="match status" value="1"/>
</dbReference>
<dbReference type="Gene3D" id="3.90.20.20">
    <property type="match status" value="1"/>
</dbReference>
<dbReference type="Gene3D" id="2.30.22.10">
    <property type="entry name" value="Head domain of nucleotide exchange factor GrpE"/>
    <property type="match status" value="1"/>
</dbReference>
<dbReference type="HAMAP" id="MF_01151">
    <property type="entry name" value="GrpE"/>
    <property type="match status" value="1"/>
</dbReference>
<dbReference type="InterPro" id="IPR000740">
    <property type="entry name" value="GrpE"/>
</dbReference>
<dbReference type="InterPro" id="IPR013805">
    <property type="entry name" value="GrpE_coiled_coil"/>
</dbReference>
<dbReference type="InterPro" id="IPR009012">
    <property type="entry name" value="GrpE_head"/>
</dbReference>
<dbReference type="NCBIfam" id="NF010738">
    <property type="entry name" value="PRK14140.1"/>
    <property type="match status" value="1"/>
</dbReference>
<dbReference type="NCBIfam" id="NF010739">
    <property type="entry name" value="PRK14141.1"/>
    <property type="match status" value="1"/>
</dbReference>
<dbReference type="NCBIfam" id="NF010748">
    <property type="entry name" value="PRK14150.1"/>
    <property type="match status" value="1"/>
</dbReference>
<dbReference type="PANTHER" id="PTHR21237">
    <property type="entry name" value="GRPE PROTEIN"/>
    <property type="match status" value="1"/>
</dbReference>
<dbReference type="PANTHER" id="PTHR21237:SF23">
    <property type="entry name" value="GRPE PROTEIN HOMOLOG, MITOCHONDRIAL"/>
    <property type="match status" value="1"/>
</dbReference>
<dbReference type="Pfam" id="PF01025">
    <property type="entry name" value="GrpE"/>
    <property type="match status" value="1"/>
</dbReference>
<dbReference type="PRINTS" id="PR00773">
    <property type="entry name" value="GRPEPROTEIN"/>
</dbReference>
<dbReference type="SUPFAM" id="SSF58014">
    <property type="entry name" value="Coiled-coil domain of nucleotide exchange factor GrpE"/>
    <property type="match status" value="1"/>
</dbReference>
<dbReference type="SUPFAM" id="SSF51064">
    <property type="entry name" value="Head domain of nucleotide exchange factor GrpE"/>
    <property type="match status" value="1"/>
</dbReference>
<dbReference type="PROSITE" id="PS01071">
    <property type="entry name" value="GRPE"/>
    <property type="match status" value="1"/>
</dbReference>
<feature type="chain" id="PRO_0000113731" description="Protein GrpE">
    <location>
        <begin position="1"/>
        <end position="211"/>
    </location>
</feature>
<feature type="region of interest" description="Disordered" evidence="2">
    <location>
        <begin position="1"/>
        <end position="37"/>
    </location>
</feature>
<feature type="region of interest" description="Disordered" evidence="2">
    <location>
        <begin position="187"/>
        <end position="211"/>
    </location>
</feature>
<feature type="compositionally biased region" description="Basic and acidic residues" evidence="2">
    <location>
        <begin position="1"/>
        <end position="10"/>
    </location>
</feature>
<feature type="compositionally biased region" description="Acidic residues" evidence="2">
    <location>
        <begin position="27"/>
        <end position="36"/>
    </location>
</feature>
<feature type="compositionally biased region" description="Polar residues" evidence="2">
    <location>
        <begin position="201"/>
        <end position="211"/>
    </location>
</feature>
<protein>
    <recommendedName>
        <fullName evidence="1">Protein GrpE</fullName>
    </recommendedName>
    <alternativeName>
        <fullName evidence="1">HSP-70 cofactor</fullName>
    </alternativeName>
</protein>
<sequence length="211" mass="22831">MTDDTKKPGPDADVAEEFVDPAQAGEEQAETAEPDPVELLKAENADLRDKFLRLAAEMDNLRRRTERDVKDAKAYSLAGFARDMLAVSDNLRRALEAIPDELKTNGEAGLNGLIEGVEMTERSMLSTLERHGVKKIDAEGQKFDPNFHQAMFEVPNTAVPNNTVLQVIQAGFTIGDRVLRPAMVGVAKGGPKAEPSASAEPGTSSLNEKDA</sequence>
<accession>P63187</accession>
<accession>O68444</accession>
<reference key="1">
    <citation type="journal article" date="2001" name="Science">
        <title>The genome of the natural genetic engineer Agrobacterium tumefaciens C58.</title>
        <authorList>
            <person name="Wood D.W."/>
            <person name="Setubal J.C."/>
            <person name="Kaul R."/>
            <person name="Monks D.E."/>
            <person name="Kitajima J.P."/>
            <person name="Okura V.K."/>
            <person name="Zhou Y."/>
            <person name="Chen L."/>
            <person name="Wood G.E."/>
            <person name="Almeida N.F. Jr."/>
            <person name="Woo L."/>
            <person name="Chen Y."/>
            <person name="Paulsen I.T."/>
            <person name="Eisen J.A."/>
            <person name="Karp P.D."/>
            <person name="Bovee D. Sr."/>
            <person name="Chapman P."/>
            <person name="Clendenning J."/>
            <person name="Deatherage G."/>
            <person name="Gillet W."/>
            <person name="Grant C."/>
            <person name="Kutyavin T."/>
            <person name="Levy R."/>
            <person name="Li M.-J."/>
            <person name="McClelland E."/>
            <person name="Palmieri A."/>
            <person name="Raymond C."/>
            <person name="Rouse G."/>
            <person name="Saenphimmachak C."/>
            <person name="Wu Z."/>
            <person name="Romero P."/>
            <person name="Gordon D."/>
            <person name="Zhang S."/>
            <person name="Yoo H."/>
            <person name="Tao Y."/>
            <person name="Biddle P."/>
            <person name="Jung M."/>
            <person name="Krespan W."/>
            <person name="Perry M."/>
            <person name="Gordon-Kamm B."/>
            <person name="Liao L."/>
            <person name="Kim S."/>
            <person name="Hendrick C."/>
            <person name="Zhao Z.-Y."/>
            <person name="Dolan M."/>
            <person name="Chumley F."/>
            <person name="Tingey S.V."/>
            <person name="Tomb J.-F."/>
            <person name="Gordon M.P."/>
            <person name="Olson M.V."/>
            <person name="Nester E.W."/>
        </authorList>
    </citation>
    <scope>NUCLEOTIDE SEQUENCE [LARGE SCALE GENOMIC DNA]</scope>
    <source>
        <strain>C58 / ATCC 33970</strain>
    </source>
</reference>
<reference key="2">
    <citation type="journal article" date="2001" name="Science">
        <title>Genome sequence of the plant pathogen and biotechnology agent Agrobacterium tumefaciens C58.</title>
        <authorList>
            <person name="Goodner B."/>
            <person name="Hinkle G."/>
            <person name="Gattung S."/>
            <person name="Miller N."/>
            <person name="Blanchard M."/>
            <person name="Qurollo B."/>
            <person name="Goldman B.S."/>
            <person name="Cao Y."/>
            <person name="Askenazi M."/>
            <person name="Halling C."/>
            <person name="Mullin L."/>
            <person name="Houmiel K."/>
            <person name="Gordon J."/>
            <person name="Vaudin M."/>
            <person name="Iartchouk O."/>
            <person name="Epp A."/>
            <person name="Liu F."/>
            <person name="Wollam C."/>
            <person name="Allinger M."/>
            <person name="Doughty D."/>
            <person name="Scott C."/>
            <person name="Lappas C."/>
            <person name="Markelz B."/>
            <person name="Flanagan C."/>
            <person name="Crowell C."/>
            <person name="Gurson J."/>
            <person name="Lomo C."/>
            <person name="Sear C."/>
            <person name="Strub G."/>
            <person name="Cielo C."/>
            <person name="Slater S."/>
        </authorList>
    </citation>
    <scope>NUCLEOTIDE SEQUENCE [LARGE SCALE GENOMIC DNA]</scope>
    <source>
        <strain>C58 / ATCC 33970</strain>
    </source>
</reference>
<comment type="function">
    <text evidence="1">Participates actively in the response to hyperosmotic and heat shock by preventing the aggregation of stress-denatured proteins, in association with DnaK and GrpE. It is the nucleotide exchange factor for DnaK and may function as a thermosensor. Unfolded proteins bind initially to DnaJ; upon interaction with the DnaJ-bound protein, DnaK hydrolyzes its bound ATP, resulting in the formation of a stable complex. GrpE releases ADP from DnaK; ATP binding to DnaK triggers the release of the substrate protein, thus completing the reaction cycle. Several rounds of ATP-dependent interactions between DnaJ, DnaK and GrpE are required for fully efficient folding.</text>
</comment>
<comment type="subunit">
    <text evidence="1">Homodimer.</text>
</comment>
<comment type="subcellular location">
    <subcellularLocation>
        <location evidence="1">Cytoplasm</location>
    </subcellularLocation>
</comment>
<comment type="similarity">
    <text evidence="1">Belongs to the GrpE family.</text>
</comment>
<proteinExistence type="inferred from homology"/>
<evidence type="ECO:0000255" key="1">
    <source>
        <dbReference type="HAMAP-Rule" id="MF_01151"/>
    </source>
</evidence>
<evidence type="ECO:0000256" key="2">
    <source>
        <dbReference type="SAM" id="MobiDB-lite"/>
    </source>
</evidence>
<gene>
    <name evidence="1" type="primary">grpE</name>
    <name type="ordered locus">Atu0329</name>
    <name type="ORF">AGR_C_573</name>
</gene>
<organism>
    <name type="scientific">Agrobacterium fabrum (strain C58 / ATCC 33970)</name>
    <name type="common">Agrobacterium tumefaciens (strain C58)</name>
    <dbReference type="NCBI Taxonomy" id="176299"/>
    <lineage>
        <taxon>Bacteria</taxon>
        <taxon>Pseudomonadati</taxon>
        <taxon>Pseudomonadota</taxon>
        <taxon>Alphaproteobacteria</taxon>
        <taxon>Hyphomicrobiales</taxon>
        <taxon>Rhizobiaceae</taxon>
        <taxon>Rhizobium/Agrobacterium group</taxon>
        <taxon>Agrobacterium</taxon>
        <taxon>Agrobacterium tumefaciens complex</taxon>
    </lineage>
</organism>